<proteinExistence type="inferred from homology"/>
<organism>
    <name type="scientific">Pseudoalteromonas atlantica (strain T6c / ATCC BAA-1087)</name>
    <dbReference type="NCBI Taxonomy" id="3042615"/>
    <lineage>
        <taxon>Bacteria</taxon>
        <taxon>Pseudomonadati</taxon>
        <taxon>Pseudomonadota</taxon>
        <taxon>Gammaproteobacteria</taxon>
        <taxon>Alteromonadales</taxon>
        <taxon>Alteromonadaceae</taxon>
        <taxon>Paraglaciecola</taxon>
    </lineage>
</organism>
<name>ATPF1_PSEA6</name>
<protein>
    <recommendedName>
        <fullName evidence="1">ATP synthase subunit b 1</fullName>
    </recommendedName>
    <alternativeName>
        <fullName evidence="1">ATP synthase F(0) sector subunit b 1</fullName>
    </alternativeName>
    <alternativeName>
        <fullName evidence="1">ATPase subunit I 1</fullName>
    </alternativeName>
    <alternativeName>
        <fullName evidence="1">F-type ATPase subunit b 1</fullName>
        <shortName evidence="1">F-ATPase subunit b 1</shortName>
    </alternativeName>
</protein>
<gene>
    <name evidence="1" type="primary">atpF1</name>
    <name type="ordered locus">Patl_2674</name>
</gene>
<accession>Q15SF2</accession>
<evidence type="ECO:0000255" key="1">
    <source>
        <dbReference type="HAMAP-Rule" id="MF_01398"/>
    </source>
</evidence>
<evidence type="ECO:0000256" key="2">
    <source>
        <dbReference type="SAM" id="MobiDB-lite"/>
    </source>
</evidence>
<reference key="1">
    <citation type="submission" date="2006-06" db="EMBL/GenBank/DDBJ databases">
        <title>Complete sequence of Pseudoalteromonas atlantica T6c.</title>
        <authorList>
            <consortium name="US DOE Joint Genome Institute"/>
            <person name="Copeland A."/>
            <person name="Lucas S."/>
            <person name="Lapidus A."/>
            <person name="Barry K."/>
            <person name="Detter J.C."/>
            <person name="Glavina del Rio T."/>
            <person name="Hammon N."/>
            <person name="Israni S."/>
            <person name="Dalin E."/>
            <person name="Tice H."/>
            <person name="Pitluck S."/>
            <person name="Saunders E."/>
            <person name="Brettin T."/>
            <person name="Bruce D."/>
            <person name="Han C."/>
            <person name="Tapia R."/>
            <person name="Gilna P."/>
            <person name="Schmutz J."/>
            <person name="Larimer F."/>
            <person name="Land M."/>
            <person name="Hauser L."/>
            <person name="Kyrpides N."/>
            <person name="Kim E."/>
            <person name="Karls A.C."/>
            <person name="Bartlett D."/>
            <person name="Higgins B.P."/>
            <person name="Richardson P."/>
        </authorList>
    </citation>
    <scope>NUCLEOTIDE SEQUENCE [LARGE SCALE GENOMIC DNA]</scope>
    <source>
        <strain>T6c / ATCC BAA-1087</strain>
    </source>
</reference>
<feature type="chain" id="PRO_0000368680" description="ATP synthase subunit b 1">
    <location>
        <begin position="1"/>
        <end position="302"/>
    </location>
</feature>
<feature type="transmembrane region" description="Helical" evidence="1">
    <location>
        <begin position="5"/>
        <end position="22"/>
    </location>
</feature>
<feature type="region of interest" description="Disordered" evidence="2">
    <location>
        <begin position="278"/>
        <end position="302"/>
    </location>
</feature>
<keyword id="KW-0066">ATP synthesis</keyword>
<keyword id="KW-0997">Cell inner membrane</keyword>
<keyword id="KW-1003">Cell membrane</keyword>
<keyword id="KW-0138">CF(0)</keyword>
<keyword id="KW-0375">Hydrogen ion transport</keyword>
<keyword id="KW-0406">Ion transport</keyword>
<keyword id="KW-0472">Membrane</keyword>
<keyword id="KW-0812">Transmembrane</keyword>
<keyword id="KW-1133">Transmembrane helix</keyword>
<keyword id="KW-0813">Transport</keyword>
<comment type="function">
    <text evidence="1">F(1)F(0) ATP synthase produces ATP from ADP in the presence of a proton or sodium gradient. F-type ATPases consist of two structural domains, F(1) containing the extramembraneous catalytic core and F(0) containing the membrane proton channel, linked together by a central stalk and a peripheral stalk. During catalysis, ATP synthesis in the catalytic domain of F(1) is coupled via a rotary mechanism of the central stalk subunits to proton translocation.</text>
</comment>
<comment type="function">
    <text evidence="1">Component of the F(0) channel, it forms part of the peripheral stalk, linking F(1) to F(0).</text>
</comment>
<comment type="subunit">
    <text evidence="1">F-type ATPases have 2 components, F(1) - the catalytic core - and F(0) - the membrane proton channel. F(1) has five subunits: alpha(3), beta(3), gamma(1), delta(1), epsilon(1). F(0) has three main subunits: a(1), b(2) and c(10-14). The alpha and beta chains form an alternating ring which encloses part of the gamma chain. F(1) is attached to F(0) by a central stalk formed by the gamma and epsilon chains, while a peripheral stalk is formed by the delta and b chains.</text>
</comment>
<comment type="subcellular location">
    <subcellularLocation>
        <location evidence="1">Cell inner membrane</location>
        <topology evidence="1">Single-pass membrane protein</topology>
    </subcellularLocation>
</comment>
<comment type="similarity">
    <text evidence="1">Belongs to the ATPase B chain family.</text>
</comment>
<dbReference type="EMBL" id="CP000388">
    <property type="protein sequence ID" value="ABG41186.1"/>
    <property type="molecule type" value="Genomic_DNA"/>
</dbReference>
<dbReference type="RefSeq" id="WP_011575447.1">
    <property type="nucleotide sequence ID" value="NC_008228.1"/>
</dbReference>
<dbReference type="SMR" id="Q15SF2"/>
<dbReference type="STRING" id="342610.Patl_2674"/>
<dbReference type="KEGG" id="pat:Patl_2674"/>
<dbReference type="eggNOG" id="COG0711">
    <property type="taxonomic scope" value="Bacteria"/>
</dbReference>
<dbReference type="HOGENOM" id="CLU_070737_0_0_6"/>
<dbReference type="OrthoDB" id="466272at2"/>
<dbReference type="Proteomes" id="UP000001981">
    <property type="component" value="Chromosome"/>
</dbReference>
<dbReference type="GO" id="GO:0005886">
    <property type="term" value="C:plasma membrane"/>
    <property type="evidence" value="ECO:0007669"/>
    <property type="project" value="UniProtKB-SubCell"/>
</dbReference>
<dbReference type="GO" id="GO:0045259">
    <property type="term" value="C:proton-transporting ATP synthase complex"/>
    <property type="evidence" value="ECO:0007669"/>
    <property type="project" value="UniProtKB-KW"/>
</dbReference>
<dbReference type="GO" id="GO:0046933">
    <property type="term" value="F:proton-transporting ATP synthase activity, rotational mechanism"/>
    <property type="evidence" value="ECO:0007669"/>
    <property type="project" value="UniProtKB-UniRule"/>
</dbReference>
<dbReference type="GO" id="GO:0046961">
    <property type="term" value="F:proton-transporting ATPase activity, rotational mechanism"/>
    <property type="evidence" value="ECO:0007669"/>
    <property type="project" value="TreeGrafter"/>
</dbReference>
<dbReference type="CDD" id="cd06503">
    <property type="entry name" value="ATP-synt_Fo_b"/>
    <property type="match status" value="1"/>
</dbReference>
<dbReference type="HAMAP" id="MF_01398">
    <property type="entry name" value="ATP_synth_b_bprime"/>
    <property type="match status" value="1"/>
</dbReference>
<dbReference type="InterPro" id="IPR017707">
    <property type="entry name" value="Alt_ATP_synth_F0_bsu"/>
</dbReference>
<dbReference type="InterPro" id="IPR002146">
    <property type="entry name" value="ATP_synth_b/b'su_bac/chlpt"/>
</dbReference>
<dbReference type="InterPro" id="IPR005864">
    <property type="entry name" value="ATP_synth_F0_bsu_bac"/>
</dbReference>
<dbReference type="InterPro" id="IPR050059">
    <property type="entry name" value="ATP_synthase_B_chain"/>
</dbReference>
<dbReference type="NCBIfam" id="TIGR03321">
    <property type="entry name" value="alt_F1F0_F0_B"/>
    <property type="match status" value="1"/>
</dbReference>
<dbReference type="NCBIfam" id="TIGR01144">
    <property type="entry name" value="ATP_synt_b"/>
    <property type="match status" value="1"/>
</dbReference>
<dbReference type="PANTHER" id="PTHR33445">
    <property type="entry name" value="ATP SYNTHASE SUBUNIT B', CHLOROPLASTIC"/>
    <property type="match status" value="1"/>
</dbReference>
<dbReference type="PANTHER" id="PTHR33445:SF2">
    <property type="entry name" value="ATP SYNTHASE SUBUNIT B', CHLOROPLASTIC"/>
    <property type="match status" value="1"/>
</dbReference>
<dbReference type="Pfam" id="PF00430">
    <property type="entry name" value="ATP-synt_B"/>
    <property type="match status" value="1"/>
</dbReference>
<sequence length="302" mass="33679">MPIDWFTVIAQGINFLLLLWLLKRFLYHPIIDGLDAREKKIAGILADADTCKSQAENLRTEYESKLAHIEQERTQLVGEAKNEAQMASQSLLDNARHNAEQIVKKRVAALRLEMAELKQDVLQQNIHEVYAISRKVLTELADGDLHTKMIDKLVQRLNTLDDDQHAALTRALANSGNQIVVRSAQPLAEAQKKQLLACLQQYLPSFKKDSSQNNSVNAAPSNPAPSIKLSESIVPRLINGIELTMGGWKLAWSTDNYLAELQEDVEAEFIPFTETLLGLPENEGTDNPEANPPHAEAKIPHA</sequence>